<name>RISB_DESAH</name>
<keyword id="KW-1185">Reference proteome</keyword>
<keyword id="KW-0686">Riboflavin biosynthesis</keyword>
<keyword id="KW-0808">Transferase</keyword>
<organism>
    <name type="scientific">Desulforapulum autotrophicum (strain ATCC 43914 / DSM 3382 / VKM B-1955 / HRM2)</name>
    <name type="common">Desulfobacterium autotrophicum</name>
    <dbReference type="NCBI Taxonomy" id="177437"/>
    <lineage>
        <taxon>Bacteria</taxon>
        <taxon>Pseudomonadati</taxon>
        <taxon>Thermodesulfobacteriota</taxon>
        <taxon>Desulfobacteria</taxon>
        <taxon>Desulfobacterales</taxon>
        <taxon>Desulfobacteraceae</taxon>
        <taxon>Desulforapulum</taxon>
    </lineage>
</organism>
<protein>
    <recommendedName>
        <fullName evidence="1">6,7-dimethyl-8-ribityllumazine synthase</fullName>
        <shortName evidence="1">DMRL synthase</shortName>
        <shortName evidence="1">LS</shortName>
        <shortName evidence="1">Lumazine synthase</shortName>
        <ecNumber evidence="1">2.5.1.78</ecNumber>
    </recommendedName>
</protein>
<reference key="1">
    <citation type="journal article" date="2009" name="Environ. Microbiol.">
        <title>Genome sequence of Desulfobacterium autotrophicum HRM2, a marine sulfate reducer oxidizing organic carbon completely to carbon dioxide.</title>
        <authorList>
            <person name="Strittmatter A.W."/>
            <person name="Liesegang H."/>
            <person name="Rabus R."/>
            <person name="Decker I."/>
            <person name="Amann J."/>
            <person name="Andres S."/>
            <person name="Henne A."/>
            <person name="Fricke W.F."/>
            <person name="Martinez-Arias R."/>
            <person name="Bartels D."/>
            <person name="Goesmann A."/>
            <person name="Krause L."/>
            <person name="Puehler A."/>
            <person name="Klenk H.P."/>
            <person name="Richter M."/>
            <person name="Schuler M."/>
            <person name="Gloeckner F.O."/>
            <person name="Meyerdierks A."/>
            <person name="Gottschalk G."/>
            <person name="Amann R."/>
        </authorList>
    </citation>
    <scope>NUCLEOTIDE SEQUENCE [LARGE SCALE GENOMIC DNA]</scope>
    <source>
        <strain>ATCC 43914 / DSM 3382 / VKM B-1955 / HRM2</strain>
    </source>
</reference>
<proteinExistence type="inferred from homology"/>
<gene>
    <name evidence="1" type="primary">ribH</name>
    <name type="ordered locus">HRM2_31240</name>
</gene>
<sequence>MPQIIEAGLSAQGKKFGIIAARFNDFITERLVGGALDALTRSGAADGDITLLKVPGAFEIPLAAKKMAMTGKFDAIICLGAVIRGATNHYDYVCAEVSKGIACVSLDHGLPVMFGILTTESIEQAIERAGTKAGNKGFDTALAAIEMANLMTVMGEA</sequence>
<evidence type="ECO:0000255" key="1">
    <source>
        <dbReference type="HAMAP-Rule" id="MF_00178"/>
    </source>
</evidence>
<dbReference type="EC" id="2.5.1.78" evidence="1"/>
<dbReference type="EMBL" id="CP001087">
    <property type="protein sequence ID" value="ACN16207.1"/>
    <property type="molecule type" value="Genomic_DNA"/>
</dbReference>
<dbReference type="RefSeq" id="WP_015904969.1">
    <property type="nucleotide sequence ID" value="NC_012108.1"/>
</dbReference>
<dbReference type="SMR" id="C0QKW7"/>
<dbReference type="STRING" id="177437.HRM2_31240"/>
<dbReference type="KEGG" id="dat:HRM2_31240"/>
<dbReference type="eggNOG" id="COG0054">
    <property type="taxonomic scope" value="Bacteria"/>
</dbReference>
<dbReference type="HOGENOM" id="CLU_089358_1_1_7"/>
<dbReference type="OrthoDB" id="9809709at2"/>
<dbReference type="UniPathway" id="UPA00275">
    <property type="reaction ID" value="UER00404"/>
</dbReference>
<dbReference type="Proteomes" id="UP000000442">
    <property type="component" value="Chromosome"/>
</dbReference>
<dbReference type="GO" id="GO:0005829">
    <property type="term" value="C:cytosol"/>
    <property type="evidence" value="ECO:0007669"/>
    <property type="project" value="TreeGrafter"/>
</dbReference>
<dbReference type="GO" id="GO:0009349">
    <property type="term" value="C:riboflavin synthase complex"/>
    <property type="evidence" value="ECO:0007669"/>
    <property type="project" value="InterPro"/>
</dbReference>
<dbReference type="GO" id="GO:0000906">
    <property type="term" value="F:6,7-dimethyl-8-ribityllumazine synthase activity"/>
    <property type="evidence" value="ECO:0007669"/>
    <property type="project" value="UniProtKB-UniRule"/>
</dbReference>
<dbReference type="GO" id="GO:0009231">
    <property type="term" value="P:riboflavin biosynthetic process"/>
    <property type="evidence" value="ECO:0007669"/>
    <property type="project" value="UniProtKB-UniRule"/>
</dbReference>
<dbReference type="CDD" id="cd09209">
    <property type="entry name" value="Lumazine_synthase-I"/>
    <property type="match status" value="1"/>
</dbReference>
<dbReference type="FunFam" id="3.40.50.960:FF:000001">
    <property type="entry name" value="6,7-dimethyl-8-ribityllumazine synthase"/>
    <property type="match status" value="1"/>
</dbReference>
<dbReference type="Gene3D" id="3.40.50.960">
    <property type="entry name" value="Lumazine/riboflavin synthase"/>
    <property type="match status" value="1"/>
</dbReference>
<dbReference type="HAMAP" id="MF_00178">
    <property type="entry name" value="Lumazine_synth"/>
    <property type="match status" value="1"/>
</dbReference>
<dbReference type="InterPro" id="IPR034964">
    <property type="entry name" value="LS"/>
</dbReference>
<dbReference type="InterPro" id="IPR002180">
    <property type="entry name" value="LS/RS"/>
</dbReference>
<dbReference type="InterPro" id="IPR036467">
    <property type="entry name" value="LS/RS_sf"/>
</dbReference>
<dbReference type="NCBIfam" id="TIGR00114">
    <property type="entry name" value="lumazine-synth"/>
    <property type="match status" value="1"/>
</dbReference>
<dbReference type="NCBIfam" id="NF000812">
    <property type="entry name" value="PRK00061.1-4"/>
    <property type="match status" value="1"/>
</dbReference>
<dbReference type="PANTHER" id="PTHR21058:SF0">
    <property type="entry name" value="6,7-DIMETHYL-8-RIBITYLLUMAZINE SYNTHASE"/>
    <property type="match status" value="1"/>
</dbReference>
<dbReference type="PANTHER" id="PTHR21058">
    <property type="entry name" value="6,7-DIMETHYL-8-RIBITYLLUMAZINE SYNTHASE DMRL SYNTHASE LUMAZINE SYNTHASE"/>
    <property type="match status" value="1"/>
</dbReference>
<dbReference type="Pfam" id="PF00885">
    <property type="entry name" value="DMRL_synthase"/>
    <property type="match status" value="1"/>
</dbReference>
<dbReference type="SUPFAM" id="SSF52121">
    <property type="entry name" value="Lumazine synthase"/>
    <property type="match status" value="1"/>
</dbReference>
<feature type="chain" id="PRO_1000203787" description="6,7-dimethyl-8-ribityllumazine synthase">
    <location>
        <begin position="1"/>
        <end position="157"/>
    </location>
</feature>
<feature type="active site" description="Proton donor" evidence="1">
    <location>
        <position position="89"/>
    </location>
</feature>
<feature type="binding site" evidence="1">
    <location>
        <position position="23"/>
    </location>
    <ligand>
        <name>5-amino-6-(D-ribitylamino)uracil</name>
        <dbReference type="ChEBI" id="CHEBI:15934"/>
    </ligand>
</feature>
<feature type="binding site" evidence="1">
    <location>
        <begin position="57"/>
        <end position="59"/>
    </location>
    <ligand>
        <name>5-amino-6-(D-ribitylamino)uracil</name>
        <dbReference type="ChEBI" id="CHEBI:15934"/>
    </ligand>
</feature>
<feature type="binding site" evidence="1">
    <location>
        <begin position="81"/>
        <end position="83"/>
    </location>
    <ligand>
        <name>5-amino-6-(D-ribitylamino)uracil</name>
        <dbReference type="ChEBI" id="CHEBI:15934"/>
    </ligand>
</feature>
<feature type="binding site" evidence="1">
    <location>
        <begin position="86"/>
        <end position="87"/>
    </location>
    <ligand>
        <name>(2S)-2-hydroxy-3-oxobutyl phosphate</name>
        <dbReference type="ChEBI" id="CHEBI:58830"/>
    </ligand>
</feature>
<feature type="binding site" evidence="1">
    <location>
        <position position="114"/>
    </location>
    <ligand>
        <name>5-amino-6-(D-ribitylamino)uracil</name>
        <dbReference type="ChEBI" id="CHEBI:15934"/>
    </ligand>
</feature>
<feature type="binding site" evidence="1">
    <location>
        <position position="128"/>
    </location>
    <ligand>
        <name>(2S)-2-hydroxy-3-oxobutyl phosphate</name>
        <dbReference type="ChEBI" id="CHEBI:58830"/>
    </ligand>
</feature>
<comment type="function">
    <text evidence="1">Catalyzes the formation of 6,7-dimethyl-8-ribityllumazine by condensation of 5-amino-6-(D-ribitylamino)uracil with 3,4-dihydroxy-2-butanone 4-phosphate. This is the penultimate step in the biosynthesis of riboflavin.</text>
</comment>
<comment type="catalytic activity">
    <reaction evidence="1">
        <text>(2S)-2-hydroxy-3-oxobutyl phosphate + 5-amino-6-(D-ribitylamino)uracil = 6,7-dimethyl-8-(1-D-ribityl)lumazine + phosphate + 2 H2O + H(+)</text>
        <dbReference type="Rhea" id="RHEA:26152"/>
        <dbReference type="ChEBI" id="CHEBI:15377"/>
        <dbReference type="ChEBI" id="CHEBI:15378"/>
        <dbReference type="ChEBI" id="CHEBI:15934"/>
        <dbReference type="ChEBI" id="CHEBI:43474"/>
        <dbReference type="ChEBI" id="CHEBI:58201"/>
        <dbReference type="ChEBI" id="CHEBI:58830"/>
        <dbReference type="EC" id="2.5.1.78"/>
    </reaction>
</comment>
<comment type="pathway">
    <text evidence="1">Cofactor biosynthesis; riboflavin biosynthesis; riboflavin from 2-hydroxy-3-oxobutyl phosphate and 5-amino-6-(D-ribitylamino)uracil: step 1/2.</text>
</comment>
<comment type="similarity">
    <text evidence="1">Belongs to the DMRL synthase family.</text>
</comment>
<accession>C0QKW7</accession>